<sequence>MTERLKVVFQEKIAPKLIEKNRYKNKHQVPVIEKIVINRGLGNASQNTKILESSLNELTLIAGQRGVLTRSKKAIAAFKLREKTPVGVAVTLRGDRMYAFLDRLINLALPRIRDFQGINPKSFDGLGNYSLGLEEQLMFPEIDYDKIDQIRGMDISIITTAKKDSEGFQILKEFGMPFKE</sequence>
<organism>
    <name type="scientific">Tupiella akineta</name>
    <name type="common">Green alga</name>
    <name type="synonym">Pseudendoclonium akinetum</name>
    <dbReference type="NCBI Taxonomy" id="160070"/>
    <lineage>
        <taxon>Eukaryota</taxon>
        <taxon>Viridiplantae</taxon>
        <taxon>Chlorophyta</taxon>
        <taxon>Ulvophyceae</taxon>
        <taxon>OUU clade</taxon>
        <taxon>Ulotrichales</taxon>
        <taxon>Tupiellaceae</taxon>
        <taxon>Tupiella</taxon>
    </lineage>
</organism>
<name>RK5_TUPAK</name>
<keyword id="KW-0150">Chloroplast</keyword>
<keyword id="KW-0934">Plastid</keyword>
<keyword id="KW-0687">Ribonucleoprotein</keyword>
<keyword id="KW-0689">Ribosomal protein</keyword>
<keyword id="KW-0694">RNA-binding</keyword>
<keyword id="KW-0699">rRNA-binding</keyword>
<evidence type="ECO:0000250" key="1"/>
<evidence type="ECO:0000305" key="2"/>
<gene>
    <name type="primary">rpl5</name>
</gene>
<proteinExistence type="inferred from homology"/>
<geneLocation type="chloroplast"/>
<feature type="chain" id="PRO_0000243095" description="Large ribosomal subunit protein uL5c">
    <location>
        <begin position="1"/>
        <end position="180"/>
    </location>
</feature>
<comment type="function">
    <text evidence="1">Binds 5S rRNA, forms part of the central protuberance of the 50S subunit.</text>
</comment>
<comment type="subunit">
    <text evidence="1">Part of the 50S ribosomal subunit; contacts the 5S rRNA.</text>
</comment>
<comment type="subcellular location">
    <subcellularLocation>
        <location>Plastid</location>
        <location>Chloroplast</location>
    </subcellularLocation>
</comment>
<comment type="similarity">
    <text evidence="2">Belongs to the universal ribosomal protein uL5 family.</text>
</comment>
<reference key="1">
    <citation type="journal article" date="2005" name="Mol. Biol. Evol.">
        <title>The chloroplast genome sequence of the green alga Pseudendoclonium akinetum (Ulvophyceae) reveals unusual structural features and new insights into the branching order of chlorophyte lineages.</title>
        <authorList>
            <person name="Pombert J.-F."/>
            <person name="Otis C."/>
            <person name="Lemieux C."/>
            <person name="Turmel M."/>
        </authorList>
    </citation>
    <scope>NUCLEOTIDE SEQUENCE [LARGE SCALE GENOMIC DNA]</scope>
    <source>
        <strain>UTEX 1912</strain>
    </source>
</reference>
<dbReference type="EMBL" id="AY835431">
    <property type="protein sequence ID" value="AAV80609.1"/>
    <property type="molecule type" value="Genomic_DNA"/>
</dbReference>
<dbReference type="RefSeq" id="YP_636185.1">
    <property type="nucleotide sequence ID" value="NC_008114.1"/>
</dbReference>
<dbReference type="SMR" id="Q3ZJ82"/>
<dbReference type="GeneID" id="4108789"/>
<dbReference type="GO" id="GO:0009507">
    <property type="term" value="C:chloroplast"/>
    <property type="evidence" value="ECO:0007669"/>
    <property type="project" value="UniProtKB-SubCell"/>
</dbReference>
<dbReference type="GO" id="GO:1990904">
    <property type="term" value="C:ribonucleoprotein complex"/>
    <property type="evidence" value="ECO:0007669"/>
    <property type="project" value="UniProtKB-KW"/>
</dbReference>
<dbReference type="GO" id="GO:0005840">
    <property type="term" value="C:ribosome"/>
    <property type="evidence" value="ECO:0007669"/>
    <property type="project" value="UniProtKB-KW"/>
</dbReference>
<dbReference type="GO" id="GO:0019843">
    <property type="term" value="F:rRNA binding"/>
    <property type="evidence" value="ECO:0007669"/>
    <property type="project" value="UniProtKB-UniRule"/>
</dbReference>
<dbReference type="GO" id="GO:0003735">
    <property type="term" value="F:structural constituent of ribosome"/>
    <property type="evidence" value="ECO:0007669"/>
    <property type="project" value="InterPro"/>
</dbReference>
<dbReference type="GO" id="GO:0006412">
    <property type="term" value="P:translation"/>
    <property type="evidence" value="ECO:0007669"/>
    <property type="project" value="UniProtKB-UniRule"/>
</dbReference>
<dbReference type="FunFam" id="3.30.1440.10:FF:000001">
    <property type="entry name" value="50S ribosomal protein L5"/>
    <property type="match status" value="1"/>
</dbReference>
<dbReference type="Gene3D" id="3.30.1440.10">
    <property type="match status" value="1"/>
</dbReference>
<dbReference type="HAMAP" id="MF_01333_B">
    <property type="entry name" value="Ribosomal_uL5_B"/>
    <property type="match status" value="1"/>
</dbReference>
<dbReference type="InterPro" id="IPR002132">
    <property type="entry name" value="Ribosomal_uL5"/>
</dbReference>
<dbReference type="InterPro" id="IPR020930">
    <property type="entry name" value="Ribosomal_uL5_bac-type"/>
</dbReference>
<dbReference type="InterPro" id="IPR031309">
    <property type="entry name" value="Ribosomal_uL5_C"/>
</dbReference>
<dbReference type="InterPro" id="IPR020929">
    <property type="entry name" value="Ribosomal_uL5_CS"/>
</dbReference>
<dbReference type="InterPro" id="IPR022803">
    <property type="entry name" value="Ribosomal_uL5_dom_sf"/>
</dbReference>
<dbReference type="InterPro" id="IPR031310">
    <property type="entry name" value="Ribosomal_uL5_N"/>
</dbReference>
<dbReference type="NCBIfam" id="NF000585">
    <property type="entry name" value="PRK00010.1"/>
    <property type="match status" value="1"/>
</dbReference>
<dbReference type="PANTHER" id="PTHR11994">
    <property type="entry name" value="60S RIBOSOMAL PROTEIN L11-RELATED"/>
    <property type="match status" value="1"/>
</dbReference>
<dbReference type="Pfam" id="PF00281">
    <property type="entry name" value="Ribosomal_L5"/>
    <property type="match status" value="1"/>
</dbReference>
<dbReference type="Pfam" id="PF00673">
    <property type="entry name" value="Ribosomal_L5_C"/>
    <property type="match status" value="1"/>
</dbReference>
<dbReference type="PIRSF" id="PIRSF002161">
    <property type="entry name" value="Ribosomal_L5"/>
    <property type="match status" value="1"/>
</dbReference>
<dbReference type="SUPFAM" id="SSF55282">
    <property type="entry name" value="RL5-like"/>
    <property type="match status" value="1"/>
</dbReference>
<dbReference type="PROSITE" id="PS00358">
    <property type="entry name" value="RIBOSOMAL_L5"/>
    <property type="match status" value="1"/>
</dbReference>
<protein>
    <recommendedName>
        <fullName evidence="2">Large ribosomal subunit protein uL5c</fullName>
    </recommendedName>
    <alternativeName>
        <fullName>50S ribosomal protein L5, chloroplastic</fullName>
    </alternativeName>
</protein>
<accession>Q3ZJ82</accession>